<gene>
    <name evidence="1" type="primary">rplD</name>
    <name type="ordered locus">BURPS668_3745</name>
</gene>
<evidence type="ECO:0000255" key="1">
    <source>
        <dbReference type="HAMAP-Rule" id="MF_01328"/>
    </source>
</evidence>
<evidence type="ECO:0000256" key="2">
    <source>
        <dbReference type="SAM" id="MobiDB-lite"/>
    </source>
</evidence>
<evidence type="ECO:0000305" key="3"/>
<comment type="function">
    <text evidence="1">One of the primary rRNA binding proteins, this protein initially binds near the 5'-end of the 23S rRNA. It is important during the early stages of 50S assembly. It makes multiple contacts with different domains of the 23S rRNA in the assembled 50S subunit and ribosome.</text>
</comment>
<comment type="function">
    <text evidence="1">Forms part of the polypeptide exit tunnel.</text>
</comment>
<comment type="subunit">
    <text evidence="1">Part of the 50S ribosomal subunit.</text>
</comment>
<comment type="similarity">
    <text evidence="1">Belongs to the universal ribosomal protein uL4 family.</text>
</comment>
<dbReference type="EMBL" id="CP000570">
    <property type="protein sequence ID" value="ABN82850.1"/>
    <property type="molecule type" value="Genomic_DNA"/>
</dbReference>
<dbReference type="RefSeq" id="WP_004199276.1">
    <property type="nucleotide sequence ID" value="NC_009074.1"/>
</dbReference>
<dbReference type="SMR" id="A3NEH8"/>
<dbReference type="GeneID" id="93061831"/>
<dbReference type="KEGG" id="bpd:BURPS668_3745"/>
<dbReference type="HOGENOM" id="CLU_041575_5_2_4"/>
<dbReference type="GO" id="GO:1990904">
    <property type="term" value="C:ribonucleoprotein complex"/>
    <property type="evidence" value="ECO:0007669"/>
    <property type="project" value="UniProtKB-KW"/>
</dbReference>
<dbReference type="GO" id="GO:0005840">
    <property type="term" value="C:ribosome"/>
    <property type="evidence" value="ECO:0007669"/>
    <property type="project" value="UniProtKB-KW"/>
</dbReference>
<dbReference type="GO" id="GO:0019843">
    <property type="term" value="F:rRNA binding"/>
    <property type="evidence" value="ECO:0007669"/>
    <property type="project" value="UniProtKB-UniRule"/>
</dbReference>
<dbReference type="GO" id="GO:0003735">
    <property type="term" value="F:structural constituent of ribosome"/>
    <property type="evidence" value="ECO:0007669"/>
    <property type="project" value="InterPro"/>
</dbReference>
<dbReference type="GO" id="GO:0006412">
    <property type="term" value="P:translation"/>
    <property type="evidence" value="ECO:0007669"/>
    <property type="project" value="UniProtKB-UniRule"/>
</dbReference>
<dbReference type="Gene3D" id="3.40.1370.10">
    <property type="match status" value="1"/>
</dbReference>
<dbReference type="HAMAP" id="MF_01328_B">
    <property type="entry name" value="Ribosomal_uL4_B"/>
    <property type="match status" value="1"/>
</dbReference>
<dbReference type="InterPro" id="IPR002136">
    <property type="entry name" value="Ribosomal_uL4"/>
</dbReference>
<dbReference type="InterPro" id="IPR013005">
    <property type="entry name" value="Ribosomal_uL4-like"/>
</dbReference>
<dbReference type="InterPro" id="IPR023574">
    <property type="entry name" value="Ribosomal_uL4_dom_sf"/>
</dbReference>
<dbReference type="NCBIfam" id="TIGR03953">
    <property type="entry name" value="rplD_bact"/>
    <property type="match status" value="1"/>
</dbReference>
<dbReference type="PANTHER" id="PTHR10746">
    <property type="entry name" value="50S RIBOSOMAL PROTEIN L4"/>
    <property type="match status" value="1"/>
</dbReference>
<dbReference type="PANTHER" id="PTHR10746:SF6">
    <property type="entry name" value="LARGE RIBOSOMAL SUBUNIT PROTEIN UL4M"/>
    <property type="match status" value="1"/>
</dbReference>
<dbReference type="Pfam" id="PF00573">
    <property type="entry name" value="Ribosomal_L4"/>
    <property type="match status" value="1"/>
</dbReference>
<dbReference type="SUPFAM" id="SSF52166">
    <property type="entry name" value="Ribosomal protein L4"/>
    <property type="match status" value="1"/>
</dbReference>
<reference key="1">
    <citation type="journal article" date="2010" name="Genome Biol. Evol.">
        <title>Continuing evolution of Burkholderia mallei through genome reduction and large-scale rearrangements.</title>
        <authorList>
            <person name="Losada L."/>
            <person name="Ronning C.M."/>
            <person name="DeShazer D."/>
            <person name="Woods D."/>
            <person name="Fedorova N."/>
            <person name="Kim H.S."/>
            <person name="Shabalina S.A."/>
            <person name="Pearson T.R."/>
            <person name="Brinkac L."/>
            <person name="Tan P."/>
            <person name="Nandi T."/>
            <person name="Crabtree J."/>
            <person name="Badger J."/>
            <person name="Beckstrom-Sternberg S."/>
            <person name="Saqib M."/>
            <person name="Schutzer S.E."/>
            <person name="Keim P."/>
            <person name="Nierman W.C."/>
        </authorList>
    </citation>
    <scope>NUCLEOTIDE SEQUENCE [LARGE SCALE GENOMIC DNA]</scope>
    <source>
        <strain>668</strain>
    </source>
</reference>
<sequence length="206" mass="22866">MELKLLNSNGQEGAVVNASDVVFGRDYNEALIHQVVVAYQANARQGNRAQKDREQVKHTTKKPWRQKGTGRARAGMSSSPLWRGGGRIFPNSPDENFSHKVNKKMHRAGLCSIFSQLAREGRLSVVEDIVLEAPKTKLLADKFKAMGLDSVLVITDTVDENLYLASRNLPHVAVVEPRYADPLSLIYFKKVLVTKAAVAQIEELLS</sequence>
<organism>
    <name type="scientific">Burkholderia pseudomallei (strain 668)</name>
    <dbReference type="NCBI Taxonomy" id="320373"/>
    <lineage>
        <taxon>Bacteria</taxon>
        <taxon>Pseudomonadati</taxon>
        <taxon>Pseudomonadota</taxon>
        <taxon>Betaproteobacteria</taxon>
        <taxon>Burkholderiales</taxon>
        <taxon>Burkholderiaceae</taxon>
        <taxon>Burkholderia</taxon>
        <taxon>pseudomallei group</taxon>
    </lineage>
</organism>
<proteinExistence type="inferred from homology"/>
<accession>A3NEH8</accession>
<keyword id="KW-0687">Ribonucleoprotein</keyword>
<keyword id="KW-0689">Ribosomal protein</keyword>
<keyword id="KW-0694">RNA-binding</keyword>
<keyword id="KW-0699">rRNA-binding</keyword>
<name>RL4_BURP6</name>
<protein>
    <recommendedName>
        <fullName evidence="1">Large ribosomal subunit protein uL4</fullName>
    </recommendedName>
    <alternativeName>
        <fullName evidence="3">50S ribosomal protein L4</fullName>
    </alternativeName>
</protein>
<feature type="chain" id="PRO_1000052371" description="Large ribosomal subunit protein uL4">
    <location>
        <begin position="1"/>
        <end position="206"/>
    </location>
</feature>
<feature type="region of interest" description="Disordered" evidence="2">
    <location>
        <begin position="45"/>
        <end position="85"/>
    </location>
</feature>
<feature type="compositionally biased region" description="Basic residues" evidence="2">
    <location>
        <begin position="58"/>
        <end position="70"/>
    </location>
</feature>